<feature type="initiator methionine" description="Removed" evidence="19">
    <location>
        <position position="1"/>
    </location>
</feature>
<feature type="chain" id="PRO_0000213667" description="Ran-specific GTPase-activating protein">
    <location>
        <begin position="2"/>
        <end position="201"/>
    </location>
</feature>
<feature type="domain" description="RanBD1" evidence="2">
    <location>
        <begin position="26"/>
        <end position="164"/>
    </location>
</feature>
<feature type="region of interest" description="Disordered" evidence="3">
    <location>
        <begin position="1"/>
        <end position="35"/>
    </location>
</feature>
<feature type="region of interest" description="Disordered" evidence="3">
    <location>
        <begin position="163"/>
        <end position="201"/>
    </location>
</feature>
<feature type="compositionally biased region" description="Basic and acidic residues" evidence="3">
    <location>
        <begin position="1"/>
        <end position="26"/>
    </location>
</feature>
<feature type="modified residue" description="N-acetylalanine" evidence="19">
    <location>
        <position position="2"/>
    </location>
</feature>
<feature type="modified residue" description="Phosphothreonine" evidence="18">
    <location>
        <position position="13"/>
    </location>
</feature>
<feature type="modified residue" description="Phosphothreonine" evidence="18">
    <location>
        <position position="18"/>
    </location>
</feature>
<feature type="modified residue" description="Phosphoserine" evidence="18">
    <location>
        <position position="21"/>
    </location>
</feature>
<feature type="modified residue" description="Phosphoserine" evidence="21 22 23">
    <location>
        <position position="60"/>
    </location>
</feature>
<feature type="modified residue" description="N6-acetyllysine; alternate" evidence="20">
    <location>
        <position position="150"/>
    </location>
</feature>
<feature type="modified residue" description="N6-succinyllysine; alternate" evidence="1">
    <location>
        <position position="150"/>
    </location>
</feature>
<feature type="modified residue" description="N6-acetyllysine" evidence="20">
    <location>
        <position position="183"/>
    </location>
</feature>
<feature type="modified residue" description="Phosphoserine" evidence="22">
    <location>
        <position position="188"/>
    </location>
</feature>
<feature type="cross-link" description="Glycyl lysine isopeptide (Lys-Gly) (interchain with G-Cter in SUMO2)" evidence="24 25 26">
    <location>
        <position position="190"/>
    </location>
</feature>
<feature type="splice variant" id="VSP_055104" description="In isoform 2." evidence="13 14">
    <location>
        <position position="169"/>
    </location>
</feature>
<feature type="sequence variant" id="VAR_036567" description="In a breast cancer sample; somatic mutation." evidence="6">
    <original>E</original>
    <variation>D</variation>
    <location>
        <position position="16"/>
    </location>
</feature>
<feature type="sequence variant" id="VAR_053629" description="In dbSNP:rs5746863.">
    <original>A</original>
    <variation>V</variation>
    <location>
        <position position="145"/>
    </location>
</feature>
<feature type="sequence conflict" description="In Ref. 5; BAD97226." evidence="15" ref="5">
    <original>E</original>
    <variation>V</variation>
    <location>
        <position position="61"/>
    </location>
</feature>
<feature type="strand" evidence="27">
    <location>
        <begin position="48"/>
        <end position="58"/>
    </location>
</feature>
<feature type="strand" evidence="27">
    <location>
        <begin position="67"/>
        <end position="79"/>
    </location>
</feature>
<feature type="strand" evidence="27">
    <location>
        <begin position="81"/>
        <end position="83"/>
    </location>
</feature>
<feature type="strand" evidence="27">
    <location>
        <begin position="86"/>
        <end position="92"/>
    </location>
</feature>
<feature type="turn" evidence="27">
    <location>
        <begin position="93"/>
        <end position="95"/>
    </location>
</feature>
<feature type="strand" evidence="27">
    <location>
        <begin position="98"/>
        <end position="103"/>
    </location>
</feature>
<feature type="strand" evidence="27">
    <location>
        <begin position="117"/>
        <end position="127"/>
    </location>
</feature>
<feature type="strand" evidence="27">
    <location>
        <begin position="134"/>
        <end position="141"/>
    </location>
</feature>
<feature type="helix" evidence="27">
    <location>
        <begin position="145"/>
        <end position="165"/>
    </location>
</feature>
<name>RANG_HUMAN</name>
<accession>P43487</accession>
<accession>Q53EY3</accession>
<keyword id="KW-0002">3D-structure</keyword>
<keyword id="KW-0007">Acetylation</keyword>
<keyword id="KW-0025">Alternative splicing</keyword>
<keyword id="KW-0903">Direct protein sequencing</keyword>
<keyword id="KW-0343">GTPase activation</keyword>
<keyword id="KW-1017">Isopeptide bond</keyword>
<keyword id="KW-0597">Phosphoprotein</keyword>
<keyword id="KW-1267">Proteomics identification</keyword>
<keyword id="KW-1185">Reference proteome</keyword>
<keyword id="KW-0832">Ubl conjugation</keyword>
<gene>
    <name type="primary">RANBP1</name>
</gene>
<sequence>MAAAKDTHEDHDTSTENTDESNHDPQFEPIVSLPEQEIKTLEEDEEELFKMRAKLFRFASENDLPEWKERGTGDVKLLKHKEKGAIRLLMRRDKTLKICANHYITPMMELKPNAGSDRAWVWNTHADFADECPKPELLAIRFLNAENAQKFKTKFEECRKEIEEREKKAGSGKNDHAEKVAEKLEALSVKEETKEDAEEKQ</sequence>
<reference key="1">
    <citation type="journal article" date="1995" name="EMBO J.">
        <title>Co-activation of RanGTPase and inhibition of GTP dissociation by Ran-GTP binding protein RanBP1.</title>
        <authorList>
            <person name="Bischoff F.R."/>
            <person name="Krebber H."/>
            <person name="Smirnova E."/>
            <person name="Dong W."/>
            <person name="Ponstingl H."/>
        </authorList>
    </citation>
    <scope>NUCLEOTIDE SEQUENCE [MRNA] (ISOFORM 1)</scope>
    <scope>PARTIAL PROTEIN SEQUENCE</scope>
    <scope>FUNCTION</scope>
    <scope>INTERACTION WITH RAN</scope>
    <scope>SUBUNIT</scope>
</reference>
<reference key="2">
    <citation type="journal article" date="1995" name="Mol. Gen. Genet.">
        <title>RanBP1, a Ras-like nuclear G protein binding to Ran/TC4, inhibits RCC1 via Ran/TC4.</title>
        <authorList>
            <person name="Hayashi N."/>
            <person name="Yokoyama N."/>
            <person name="Seki T."/>
            <person name="Azuma Y."/>
            <person name="Ohba T."/>
            <person name="Nishimoto T."/>
        </authorList>
    </citation>
    <scope>NUCLEOTIDE SEQUENCE [MRNA] (ISOFORM 2)</scope>
    <scope>IDENTIFICATION IN A COMPLEX WITH RAN AND RCC1</scope>
    <scope>FUNCTION</scope>
    <source>
        <tissue>Blood</tissue>
    </source>
</reference>
<reference key="3">
    <citation type="journal article" date="2004" name="Genome Biol.">
        <title>A genome annotation-driven approach to cloning the human ORFeome.</title>
        <authorList>
            <person name="Collins J.E."/>
            <person name="Wright C.L."/>
            <person name="Edwards C.A."/>
            <person name="Davis M.P."/>
            <person name="Grinham J.A."/>
            <person name="Cole C.G."/>
            <person name="Goward M.E."/>
            <person name="Aguado B."/>
            <person name="Mallya M."/>
            <person name="Mokrab Y."/>
            <person name="Huckle E.J."/>
            <person name="Beare D.M."/>
            <person name="Dunham I."/>
        </authorList>
    </citation>
    <scope>NUCLEOTIDE SEQUENCE [LARGE SCALE MRNA] (ISOFORM 1)</scope>
</reference>
<reference key="4">
    <citation type="submission" date="2005-04" db="EMBL/GenBank/DDBJ databases">
        <authorList>
            <person name="Totoki Y."/>
            <person name="Toyoda A."/>
            <person name="Takeda T."/>
            <person name="Sakaki Y."/>
            <person name="Tanaka A."/>
            <person name="Yokoyama S."/>
        </authorList>
    </citation>
    <scope>NUCLEOTIDE SEQUENCE [LARGE SCALE MRNA] (ISOFORM 2)</scope>
    <source>
        <tissue>Coronary arterial endothelium</tissue>
    </source>
</reference>
<reference key="5">
    <citation type="journal article" date="1999" name="Nature">
        <title>The DNA sequence of human chromosome 22.</title>
        <authorList>
            <person name="Dunham I."/>
            <person name="Hunt A.R."/>
            <person name="Collins J.E."/>
            <person name="Bruskiewich R."/>
            <person name="Beare D.M."/>
            <person name="Clamp M."/>
            <person name="Smink L.J."/>
            <person name="Ainscough R."/>
            <person name="Almeida J.P."/>
            <person name="Babbage A.K."/>
            <person name="Bagguley C."/>
            <person name="Bailey J."/>
            <person name="Barlow K.F."/>
            <person name="Bates K.N."/>
            <person name="Beasley O.P."/>
            <person name="Bird C.P."/>
            <person name="Blakey S.E."/>
            <person name="Bridgeman A.M."/>
            <person name="Buck D."/>
            <person name="Burgess J."/>
            <person name="Burrill W.D."/>
            <person name="Burton J."/>
            <person name="Carder C."/>
            <person name="Carter N.P."/>
            <person name="Chen Y."/>
            <person name="Clark G."/>
            <person name="Clegg S.M."/>
            <person name="Cobley V.E."/>
            <person name="Cole C.G."/>
            <person name="Collier R.E."/>
            <person name="Connor R."/>
            <person name="Conroy D."/>
            <person name="Corby N.R."/>
            <person name="Coville G.J."/>
            <person name="Cox A.V."/>
            <person name="Davis J."/>
            <person name="Dawson E."/>
            <person name="Dhami P.D."/>
            <person name="Dockree C."/>
            <person name="Dodsworth S.J."/>
            <person name="Durbin R.M."/>
            <person name="Ellington A.G."/>
            <person name="Evans K.L."/>
            <person name="Fey J.M."/>
            <person name="Fleming K."/>
            <person name="French L."/>
            <person name="Garner A.A."/>
            <person name="Gilbert J.G.R."/>
            <person name="Goward M.E."/>
            <person name="Grafham D.V."/>
            <person name="Griffiths M.N.D."/>
            <person name="Hall C."/>
            <person name="Hall R.E."/>
            <person name="Hall-Tamlyn G."/>
            <person name="Heathcott R.W."/>
            <person name="Ho S."/>
            <person name="Holmes S."/>
            <person name="Hunt S.E."/>
            <person name="Jones M.C."/>
            <person name="Kershaw J."/>
            <person name="Kimberley A.M."/>
            <person name="King A."/>
            <person name="Laird G.K."/>
            <person name="Langford C.F."/>
            <person name="Leversha M.A."/>
            <person name="Lloyd C."/>
            <person name="Lloyd D.M."/>
            <person name="Martyn I.D."/>
            <person name="Mashreghi-Mohammadi M."/>
            <person name="Matthews L.H."/>
            <person name="Mccann O.T."/>
            <person name="Mcclay J."/>
            <person name="Mclaren S."/>
            <person name="McMurray A.A."/>
            <person name="Milne S.A."/>
            <person name="Mortimore B.J."/>
            <person name="Odell C.N."/>
            <person name="Pavitt R."/>
            <person name="Pearce A.V."/>
            <person name="Pearson D."/>
            <person name="Phillimore B.J.C.T."/>
            <person name="Phillips S.H."/>
            <person name="Plumb R.W."/>
            <person name="Ramsay H."/>
            <person name="Ramsey Y."/>
            <person name="Rogers L."/>
            <person name="Ross M.T."/>
            <person name="Scott C.E."/>
            <person name="Sehra H.K."/>
            <person name="Skuce C.D."/>
            <person name="Smalley S."/>
            <person name="Smith M.L."/>
            <person name="Soderlund C."/>
            <person name="Spragon L."/>
            <person name="Steward C.A."/>
            <person name="Sulston J.E."/>
            <person name="Swann R.M."/>
            <person name="Vaudin M."/>
            <person name="Wall M."/>
            <person name="Wallis J.M."/>
            <person name="Whiteley M.N."/>
            <person name="Willey D.L."/>
            <person name="Williams L."/>
            <person name="Williams S.A."/>
            <person name="Williamson H."/>
            <person name="Wilmer T.E."/>
            <person name="Wilming L."/>
            <person name="Wright C.L."/>
            <person name="Hubbard T."/>
            <person name="Bentley D.R."/>
            <person name="Beck S."/>
            <person name="Rogers J."/>
            <person name="Shimizu N."/>
            <person name="Minoshima S."/>
            <person name="Kawasaki K."/>
            <person name="Sasaki T."/>
            <person name="Asakawa S."/>
            <person name="Kudoh J."/>
            <person name="Shintani A."/>
            <person name="Shibuya K."/>
            <person name="Yoshizaki Y."/>
            <person name="Aoki N."/>
            <person name="Mitsuyama S."/>
            <person name="Roe B.A."/>
            <person name="Chen F."/>
            <person name="Chu L."/>
            <person name="Crabtree J."/>
            <person name="Deschamps S."/>
            <person name="Do A."/>
            <person name="Do T."/>
            <person name="Dorman A."/>
            <person name="Fang F."/>
            <person name="Fu Y."/>
            <person name="Hu P."/>
            <person name="Hua A."/>
            <person name="Kenton S."/>
            <person name="Lai H."/>
            <person name="Lao H.I."/>
            <person name="Lewis J."/>
            <person name="Lewis S."/>
            <person name="Lin S.-P."/>
            <person name="Loh P."/>
            <person name="Malaj E."/>
            <person name="Nguyen T."/>
            <person name="Pan H."/>
            <person name="Phan S."/>
            <person name="Qi S."/>
            <person name="Qian Y."/>
            <person name="Ray L."/>
            <person name="Ren Q."/>
            <person name="Shaull S."/>
            <person name="Sloan D."/>
            <person name="Song L."/>
            <person name="Wang Q."/>
            <person name="Wang Y."/>
            <person name="Wang Z."/>
            <person name="White J."/>
            <person name="Willingham D."/>
            <person name="Wu H."/>
            <person name="Yao Z."/>
            <person name="Zhan M."/>
            <person name="Zhang G."/>
            <person name="Chissoe S."/>
            <person name="Murray J."/>
            <person name="Miller N."/>
            <person name="Minx P."/>
            <person name="Fulton R."/>
            <person name="Johnson D."/>
            <person name="Bemis G."/>
            <person name="Bentley D."/>
            <person name="Bradshaw H."/>
            <person name="Bourne S."/>
            <person name="Cordes M."/>
            <person name="Du Z."/>
            <person name="Fulton L."/>
            <person name="Goela D."/>
            <person name="Graves T."/>
            <person name="Hawkins J."/>
            <person name="Hinds K."/>
            <person name="Kemp K."/>
            <person name="Latreille P."/>
            <person name="Layman D."/>
            <person name="Ozersky P."/>
            <person name="Rohlfing T."/>
            <person name="Scheet P."/>
            <person name="Walker C."/>
            <person name="Wamsley A."/>
            <person name="Wohldmann P."/>
            <person name="Pepin K."/>
            <person name="Nelson J."/>
            <person name="Korf I."/>
            <person name="Bedell J.A."/>
            <person name="Hillier L.W."/>
            <person name="Mardis E."/>
            <person name="Waterston R."/>
            <person name="Wilson R."/>
            <person name="Emanuel B.S."/>
            <person name="Shaikh T."/>
            <person name="Kurahashi H."/>
            <person name="Saitta S."/>
            <person name="Budarf M.L."/>
            <person name="McDermid H.E."/>
            <person name="Johnson A."/>
            <person name="Wong A.C.C."/>
            <person name="Morrow B.E."/>
            <person name="Edelmann L."/>
            <person name="Kim U.J."/>
            <person name="Shizuya H."/>
            <person name="Simon M.I."/>
            <person name="Dumanski J.P."/>
            <person name="Peyrard M."/>
            <person name="Kedra D."/>
            <person name="Seroussi E."/>
            <person name="Fransson I."/>
            <person name="Tapia I."/>
            <person name="Bruder C.E."/>
            <person name="O'Brien K.P."/>
            <person name="Wilkinson P."/>
            <person name="Bodenteich A."/>
            <person name="Hartman K."/>
            <person name="Hu X."/>
            <person name="Khan A.S."/>
            <person name="Lane L."/>
            <person name="Tilahun Y."/>
            <person name="Wright H."/>
        </authorList>
    </citation>
    <scope>NUCLEOTIDE SEQUENCE [LARGE SCALE GENOMIC DNA]</scope>
</reference>
<reference key="6">
    <citation type="journal article" date="1995" name="Mol. Cell. Biol.">
        <title>Separate domains of the Ran GTPase interact with different factors to regulate nuclear protein import and RNA processing.</title>
        <authorList>
            <person name="Ren M."/>
            <person name="Villamarin A."/>
            <person name="Shih A."/>
            <person name="Coutavas E."/>
            <person name="Moore M.S."/>
            <person name="Locurcio M."/>
            <person name="Clarke V."/>
            <person name="Oppenheim J.D."/>
            <person name="D'Eustachio P."/>
            <person name="Rush M.G."/>
        </authorList>
    </citation>
    <scope>INTERACTION WITH RAN</scope>
</reference>
<reference key="7">
    <citation type="journal article" date="1996" name="EMBO J.">
        <title>Identification of different roles for RanGDP and RanGTP in nuclear protein import.</title>
        <authorList>
            <person name="Goerlich D."/>
            <person name="Pante N."/>
            <person name="Kutay U."/>
            <person name="Aebi U."/>
            <person name="Bischoff F.R."/>
        </authorList>
    </citation>
    <scope>INTERACTION WITH RAN</scope>
</reference>
<reference key="8">
    <citation type="journal article" date="2003" name="Nature">
        <title>Proteomic characterization of the human centrosome by protein correlation profiling.</title>
        <authorList>
            <person name="Andersen J.S."/>
            <person name="Wilkinson C.J."/>
            <person name="Mayor T."/>
            <person name="Mortensen P."/>
            <person name="Nigg E.A."/>
            <person name="Mann M."/>
        </authorList>
    </citation>
    <scope>IDENTIFICATION BY MASS SPECTROMETRY</scope>
    <source>
        <tissue>Lymphoblast</tissue>
    </source>
</reference>
<reference key="9">
    <citation type="journal article" date="2005" name="Cell Struct. Funct.">
        <title>Phosphorylation of RanGAP1 stabilizes its interaction with Ran and RanBP1.</title>
        <authorList>
            <person name="Takeda E."/>
            <person name="Hieda M."/>
            <person name="Katahira J."/>
            <person name="Yoneda Y."/>
        </authorList>
    </citation>
    <scope>IDENTIFICATION IN A COMPLEX WITH RAN AND RANGAP1</scope>
</reference>
<reference key="10">
    <citation type="journal article" date="2007" name="Cell Cycle">
        <title>Coordination of chromosome alignment and mitotic progression by the chromosome-based Ran signal.</title>
        <authorList>
            <person name="Li H.Y."/>
            <person name="Ng W.P."/>
            <person name="Wong C.H."/>
            <person name="Iglesias P.A."/>
            <person name="Zheng Y."/>
        </authorList>
    </citation>
    <scope>FUNCTION</scope>
</reference>
<reference key="11">
    <citation type="journal article" date="2008" name="Proc. Natl. Acad. Sci. U.S.A.">
        <title>A quantitative atlas of mitotic phosphorylation.</title>
        <authorList>
            <person name="Dephoure N."/>
            <person name="Zhou C."/>
            <person name="Villen J."/>
            <person name="Beausoleil S.A."/>
            <person name="Bakalarski C.E."/>
            <person name="Elledge S.J."/>
            <person name="Gygi S.P."/>
        </authorList>
    </citation>
    <scope>PHOSPHORYLATION [LARGE SCALE ANALYSIS] AT THR-13; THR-18 AND SER-21</scope>
    <scope>IDENTIFICATION BY MASS SPECTROMETRY [LARGE SCALE ANALYSIS]</scope>
    <source>
        <tissue>Cervix carcinoma</tissue>
    </source>
</reference>
<reference key="12">
    <citation type="journal article" date="2009" name="Anal. Chem.">
        <title>Lys-N and trypsin cover complementary parts of the phosphoproteome in a refined SCX-based approach.</title>
        <authorList>
            <person name="Gauci S."/>
            <person name="Helbig A.O."/>
            <person name="Slijper M."/>
            <person name="Krijgsveld J."/>
            <person name="Heck A.J."/>
            <person name="Mohammed S."/>
        </authorList>
    </citation>
    <scope>ACETYLATION [LARGE SCALE ANALYSIS] AT ALA-2</scope>
    <scope>CLEAVAGE OF INITIATOR METHIONINE [LARGE SCALE ANALYSIS]</scope>
    <scope>IDENTIFICATION BY MASS SPECTROMETRY [LARGE SCALE ANALYSIS]</scope>
</reference>
<reference key="13">
    <citation type="journal article" date="2009" name="Sci. Signal.">
        <title>Quantitative phosphoproteomic analysis of T cell receptor signaling reveals system-wide modulation of protein-protein interactions.</title>
        <authorList>
            <person name="Mayya V."/>
            <person name="Lundgren D.H."/>
            <person name="Hwang S.-I."/>
            <person name="Rezaul K."/>
            <person name="Wu L."/>
            <person name="Eng J.K."/>
            <person name="Rodionov V."/>
            <person name="Han D.K."/>
        </authorList>
    </citation>
    <scope>IDENTIFICATION BY MASS SPECTROMETRY [LARGE SCALE ANALYSIS]</scope>
    <source>
        <tissue>Leukemic T-cell</tissue>
    </source>
</reference>
<reference key="14">
    <citation type="journal article" date="2009" name="Science">
        <title>Lysine acetylation targets protein complexes and co-regulates major cellular functions.</title>
        <authorList>
            <person name="Choudhary C."/>
            <person name="Kumar C."/>
            <person name="Gnad F."/>
            <person name="Nielsen M.L."/>
            <person name="Rehman M."/>
            <person name="Walther T.C."/>
            <person name="Olsen J.V."/>
            <person name="Mann M."/>
        </authorList>
    </citation>
    <scope>ACETYLATION [LARGE SCALE ANALYSIS] AT LYS-150 AND LYS-183</scope>
    <scope>IDENTIFICATION BY MASS SPECTROMETRY [LARGE SCALE ANALYSIS]</scope>
</reference>
<reference key="15">
    <citation type="journal article" date="2010" name="EMBO J.">
        <title>An allosteric mechanism to displace nuclear export cargo from CRM1 and RanGTP by RanBP1.</title>
        <authorList>
            <person name="Koyama M."/>
            <person name="Matsuura Y."/>
        </authorList>
    </citation>
    <scope>FUNCTION</scope>
</reference>
<reference key="16">
    <citation type="journal article" date="2010" name="Sci. Signal.">
        <title>Quantitative phosphoproteomics reveals widespread full phosphorylation site occupancy during mitosis.</title>
        <authorList>
            <person name="Olsen J.V."/>
            <person name="Vermeulen M."/>
            <person name="Santamaria A."/>
            <person name="Kumar C."/>
            <person name="Miller M.L."/>
            <person name="Jensen L.J."/>
            <person name="Gnad F."/>
            <person name="Cox J."/>
            <person name="Jensen T.S."/>
            <person name="Nigg E.A."/>
            <person name="Brunak S."/>
            <person name="Mann M."/>
        </authorList>
    </citation>
    <scope>IDENTIFICATION BY MASS SPECTROMETRY [LARGE SCALE ANALYSIS]</scope>
    <source>
        <tissue>Cervix carcinoma</tissue>
    </source>
</reference>
<reference key="17">
    <citation type="journal article" date="2011" name="BMC Syst. Biol.">
        <title>Initial characterization of the human central proteome.</title>
        <authorList>
            <person name="Burkard T.R."/>
            <person name="Planyavsky M."/>
            <person name="Kaupe I."/>
            <person name="Breitwieser F.P."/>
            <person name="Buerckstuemmer T."/>
            <person name="Bennett K.L."/>
            <person name="Superti-Furga G."/>
            <person name="Colinge J."/>
        </authorList>
    </citation>
    <scope>IDENTIFICATION BY MASS SPECTROMETRY [LARGE SCALE ANALYSIS]</scope>
</reference>
<reference key="18">
    <citation type="journal article" date="2011" name="Sci. Signal.">
        <title>System-wide temporal characterization of the proteome and phosphoproteome of human embryonic stem cell differentiation.</title>
        <authorList>
            <person name="Rigbolt K.T."/>
            <person name="Prokhorova T.A."/>
            <person name="Akimov V."/>
            <person name="Henningsen J."/>
            <person name="Johansen P.T."/>
            <person name="Kratchmarova I."/>
            <person name="Kassem M."/>
            <person name="Mann M."/>
            <person name="Olsen J.V."/>
            <person name="Blagoev B."/>
        </authorList>
    </citation>
    <scope>PHOSPHORYLATION [LARGE SCALE ANALYSIS] AT SER-60</scope>
    <scope>IDENTIFICATION BY MASS SPECTROMETRY [LARGE SCALE ANALYSIS]</scope>
</reference>
<reference key="19">
    <citation type="journal article" date="2013" name="J. Proteome Res.">
        <title>Toward a comprehensive characterization of a human cancer cell phosphoproteome.</title>
        <authorList>
            <person name="Zhou H."/>
            <person name="Di Palma S."/>
            <person name="Preisinger C."/>
            <person name="Peng M."/>
            <person name="Polat A.N."/>
            <person name="Heck A.J."/>
            <person name="Mohammed S."/>
        </authorList>
    </citation>
    <scope>PHOSPHORYLATION [LARGE SCALE ANALYSIS] AT SER-60 AND SER-188</scope>
    <scope>IDENTIFICATION BY MASS SPECTROMETRY [LARGE SCALE ANALYSIS]</scope>
    <source>
        <tissue>Cervix carcinoma</tissue>
        <tissue>Erythroleukemia</tissue>
    </source>
</reference>
<reference key="20">
    <citation type="journal article" date="2014" name="J. Proteomics">
        <title>An enzyme assisted RP-RPLC approach for in-depth analysis of human liver phosphoproteome.</title>
        <authorList>
            <person name="Bian Y."/>
            <person name="Song C."/>
            <person name="Cheng K."/>
            <person name="Dong M."/>
            <person name="Wang F."/>
            <person name="Huang J."/>
            <person name="Sun D."/>
            <person name="Wang L."/>
            <person name="Ye M."/>
            <person name="Zou H."/>
        </authorList>
    </citation>
    <scope>PHOSPHORYLATION [LARGE SCALE ANALYSIS] AT SER-60</scope>
    <scope>IDENTIFICATION BY MASS SPECTROMETRY [LARGE SCALE ANALYSIS]</scope>
    <source>
        <tissue>Liver</tissue>
    </source>
</reference>
<reference key="21">
    <citation type="journal article" date="2014" name="Nat. Struct. Mol. Biol.">
        <title>Uncovering global SUMOylation signaling networks in a site-specific manner.</title>
        <authorList>
            <person name="Hendriks I.A."/>
            <person name="D'Souza R.C."/>
            <person name="Yang B."/>
            <person name="Verlaan-de Vries M."/>
            <person name="Mann M."/>
            <person name="Vertegaal A.C."/>
        </authorList>
    </citation>
    <scope>SUMOYLATION [LARGE SCALE ANALYSIS] AT LYS-190</scope>
    <scope>IDENTIFICATION BY MASS SPECTROMETRY [LARGE SCALE ANALYSIS]</scope>
</reference>
<reference key="22">
    <citation type="journal article" date="2014" name="Proc. Natl. Acad. Sci. U.S.A.">
        <title>Mapping of SUMO sites and analysis of SUMOylation changes induced by external stimuli.</title>
        <authorList>
            <person name="Impens F."/>
            <person name="Radoshevich L."/>
            <person name="Cossart P."/>
            <person name="Ribet D."/>
        </authorList>
    </citation>
    <scope>IDENTIFICATION BY MASS SPECTROMETRY [LARGE SCALE ANALYSIS]</scope>
</reference>
<reference key="23">
    <citation type="journal article" date="2015" name="Cell Rep.">
        <title>SUMO-2 orchestrates chromatin modifiers in response to DNA damage.</title>
        <authorList>
            <person name="Hendriks I.A."/>
            <person name="Treffers L.W."/>
            <person name="Verlaan-de Vries M."/>
            <person name="Olsen J.V."/>
            <person name="Vertegaal A.C."/>
        </authorList>
    </citation>
    <scope>SUMOYLATION [LARGE SCALE ANALYSIS] AT LYS-190</scope>
    <scope>IDENTIFICATION BY MASS SPECTROMETRY [LARGE SCALE ANALYSIS]</scope>
</reference>
<reference key="24">
    <citation type="journal article" date="2015" name="Proteomics">
        <title>N-terminome analysis of the human mitochondrial proteome.</title>
        <authorList>
            <person name="Vaca Jacome A.S."/>
            <person name="Rabilloud T."/>
            <person name="Schaeffer-Reiss C."/>
            <person name="Rompais M."/>
            <person name="Ayoub D."/>
            <person name="Lane L."/>
            <person name="Bairoch A."/>
            <person name="Van Dorsselaer A."/>
            <person name="Carapito C."/>
        </authorList>
    </citation>
    <scope>IDENTIFICATION BY MASS SPECTROMETRY [LARGE SCALE ANALYSIS]</scope>
</reference>
<reference key="25">
    <citation type="journal article" date="2017" name="Nat. Struct. Mol. Biol.">
        <title>Site-specific mapping of the human SUMO proteome reveals co-modification with phosphorylation.</title>
        <authorList>
            <person name="Hendriks I.A."/>
            <person name="Lyon D."/>
            <person name="Young C."/>
            <person name="Jensen L.J."/>
            <person name="Vertegaal A.C."/>
            <person name="Nielsen M.L."/>
        </authorList>
    </citation>
    <scope>SUMOYLATION [LARGE SCALE ANALYSIS] AT LYS-190</scope>
    <scope>IDENTIFICATION BY MASS SPECTROMETRY [LARGE SCALE ANALYSIS]</scope>
</reference>
<reference evidence="16 17" key="26">
    <citation type="journal article" date="2002" name="Nature">
        <title>RanGAP mediates GTP hydrolysis without an arginine finger.</title>
        <authorList>
            <person name="Seewald M.J."/>
            <person name="Korner C."/>
            <person name="Wittinghofer A."/>
            <person name="Vetter I.R."/>
        </authorList>
    </citation>
    <scope>X-RAY CRYSTALLOGRAPHY (2.70 ANGSTROMS) IN COMPLEX WITH RAN AND THE FISSION YEAST ORTHOLOG OF RANGAP1</scope>
</reference>
<reference key="27">
    <citation type="journal article" date="2006" name="Science">
        <title>The consensus coding sequences of human breast and colorectal cancers.</title>
        <authorList>
            <person name="Sjoeblom T."/>
            <person name="Jones S."/>
            <person name="Wood L.D."/>
            <person name="Parsons D.W."/>
            <person name="Lin J."/>
            <person name="Barber T.D."/>
            <person name="Mandelker D."/>
            <person name="Leary R.J."/>
            <person name="Ptak J."/>
            <person name="Silliman N."/>
            <person name="Szabo S."/>
            <person name="Buckhaults P."/>
            <person name="Farrell C."/>
            <person name="Meeh P."/>
            <person name="Markowitz S.D."/>
            <person name="Willis J."/>
            <person name="Dawson D."/>
            <person name="Willson J.K.V."/>
            <person name="Gazdar A.F."/>
            <person name="Hartigan J."/>
            <person name="Wu L."/>
            <person name="Liu C."/>
            <person name="Parmigiani G."/>
            <person name="Park B.H."/>
            <person name="Bachman K.E."/>
            <person name="Papadopoulos N."/>
            <person name="Vogelstein B."/>
            <person name="Kinzler K.W."/>
            <person name="Velculescu V.E."/>
        </authorList>
    </citation>
    <scope>VARIANT [LARGE SCALE ANALYSIS] ASP-16</scope>
</reference>
<proteinExistence type="evidence at protein level"/>
<organism>
    <name type="scientific">Homo sapiens</name>
    <name type="common">Human</name>
    <dbReference type="NCBI Taxonomy" id="9606"/>
    <lineage>
        <taxon>Eukaryota</taxon>
        <taxon>Metazoa</taxon>
        <taxon>Chordata</taxon>
        <taxon>Craniata</taxon>
        <taxon>Vertebrata</taxon>
        <taxon>Euteleostomi</taxon>
        <taxon>Mammalia</taxon>
        <taxon>Eutheria</taxon>
        <taxon>Euarchontoglires</taxon>
        <taxon>Primates</taxon>
        <taxon>Haplorrhini</taxon>
        <taxon>Catarrhini</taxon>
        <taxon>Hominidae</taxon>
        <taxon>Homo</taxon>
    </lineage>
</organism>
<dbReference type="EMBL" id="X83617">
    <property type="protein sequence ID" value="CAA58592.1"/>
    <property type="molecule type" value="mRNA"/>
</dbReference>
<dbReference type="EMBL" id="D38076">
    <property type="protein sequence ID" value="BAA07269.1"/>
    <property type="molecule type" value="mRNA"/>
</dbReference>
<dbReference type="EMBL" id="CR456556">
    <property type="protein sequence ID" value="CAG30442.1"/>
    <property type="molecule type" value="mRNA"/>
</dbReference>
<dbReference type="EMBL" id="AK223506">
    <property type="protein sequence ID" value="BAD97226.1"/>
    <property type="molecule type" value="mRNA"/>
</dbReference>
<dbReference type="EMBL" id="AC006547">
    <property type="status" value="NOT_ANNOTATED_CDS"/>
    <property type="molecule type" value="Genomic_DNA"/>
</dbReference>
<dbReference type="CCDS" id="CCDS13775.1">
    <molecule id="P43487-1"/>
</dbReference>
<dbReference type="CCDS" id="CCDS63408.1">
    <molecule id="P43487-2"/>
</dbReference>
<dbReference type="PIR" id="S54290">
    <property type="entry name" value="S54290"/>
</dbReference>
<dbReference type="RefSeq" id="NP_001265568.1">
    <property type="nucleotide sequence ID" value="NM_001278639.1"/>
</dbReference>
<dbReference type="RefSeq" id="NP_001265569.1">
    <molecule id="P43487-2"/>
    <property type="nucleotide sequence ID" value="NM_001278640.2"/>
</dbReference>
<dbReference type="RefSeq" id="NP_002873.1">
    <molecule id="P43487-1"/>
    <property type="nucleotide sequence ID" value="NM_002882.4"/>
</dbReference>
<dbReference type="PDB" id="1K5D">
    <property type="method" value="X-ray"/>
    <property type="resolution" value="2.70 A"/>
    <property type="chains" value="B/E/H/K=1-201"/>
</dbReference>
<dbReference type="PDB" id="1K5G">
    <property type="method" value="X-ray"/>
    <property type="resolution" value="3.10 A"/>
    <property type="chains" value="B/E/H/K=1-201"/>
</dbReference>
<dbReference type="PDBsum" id="1K5D"/>
<dbReference type="PDBsum" id="1K5G"/>
<dbReference type="SMR" id="P43487"/>
<dbReference type="BioGRID" id="111838">
    <property type="interactions" value="226"/>
</dbReference>
<dbReference type="CORUM" id="P43487"/>
<dbReference type="DIP" id="DIP-35058N"/>
<dbReference type="FunCoup" id="P43487">
    <property type="interactions" value="2958"/>
</dbReference>
<dbReference type="IntAct" id="P43487">
    <property type="interactions" value="119"/>
</dbReference>
<dbReference type="MINT" id="P43487"/>
<dbReference type="STRING" id="9606.ENSP00000401564"/>
<dbReference type="DrugBank" id="DB09130">
    <property type="generic name" value="Copper"/>
</dbReference>
<dbReference type="DrugBank" id="DB12695">
    <property type="generic name" value="Phenethyl Isothiocyanate"/>
</dbReference>
<dbReference type="GlyGen" id="P43487">
    <property type="glycosylation" value="1 site, 1 O-linked glycan (1 site)"/>
</dbReference>
<dbReference type="iPTMnet" id="P43487"/>
<dbReference type="PhosphoSitePlus" id="P43487"/>
<dbReference type="SwissPalm" id="P43487"/>
<dbReference type="BioMuta" id="RANBP1"/>
<dbReference type="OGP" id="P43487"/>
<dbReference type="REPRODUCTION-2DPAGE" id="IPI00414127"/>
<dbReference type="jPOST" id="P43487"/>
<dbReference type="MassIVE" id="P43487"/>
<dbReference type="PaxDb" id="9606-ENSP00000401564"/>
<dbReference type="PeptideAtlas" id="P43487"/>
<dbReference type="ProteomicsDB" id="55636">
    <molecule id="P43487-1"/>
</dbReference>
<dbReference type="Pumba" id="P43487"/>
<dbReference type="TopDownProteomics" id="P43487-1">
    <molecule id="P43487-1"/>
</dbReference>
<dbReference type="Antibodypedia" id="23138">
    <property type="antibodies" value="284 antibodies from 35 providers"/>
</dbReference>
<dbReference type="DNASU" id="5902"/>
<dbReference type="Ensembl" id="ENST00000331821.8">
    <molecule id="P43487-1"/>
    <property type="protein sequence ID" value="ENSP00000327583.3"/>
    <property type="gene ID" value="ENSG00000099901.18"/>
</dbReference>
<dbReference type="Ensembl" id="ENST00000402752.5">
    <molecule id="P43487-2"/>
    <property type="protein sequence ID" value="ENSP00000384925.1"/>
    <property type="gene ID" value="ENSG00000099901.18"/>
</dbReference>
<dbReference type="GeneID" id="5902"/>
<dbReference type="KEGG" id="hsa:5902"/>
<dbReference type="UCSC" id="uc002zro.3">
    <molecule id="P43487-1"/>
    <property type="organism name" value="human"/>
</dbReference>
<dbReference type="AGR" id="HGNC:9847"/>
<dbReference type="CTD" id="5902"/>
<dbReference type="DisGeNET" id="5902"/>
<dbReference type="GeneCards" id="RANBP1"/>
<dbReference type="HGNC" id="HGNC:9847">
    <property type="gene designation" value="RANBP1"/>
</dbReference>
<dbReference type="HPA" id="ENSG00000099901">
    <property type="expression patterns" value="Low tissue specificity"/>
</dbReference>
<dbReference type="MalaCards" id="RANBP1"/>
<dbReference type="MIM" id="601180">
    <property type="type" value="gene"/>
</dbReference>
<dbReference type="neXtProt" id="NX_P43487"/>
<dbReference type="OpenTargets" id="ENSG00000099901"/>
<dbReference type="PharmGKB" id="PA34206"/>
<dbReference type="VEuPathDB" id="HostDB:ENSG00000099901"/>
<dbReference type="eggNOG" id="KOG0864">
    <property type="taxonomic scope" value="Eukaryota"/>
</dbReference>
<dbReference type="GeneTree" id="ENSGT00900000141073"/>
<dbReference type="InParanoid" id="P43487"/>
<dbReference type="OrthoDB" id="2357150at2759"/>
<dbReference type="PAN-GO" id="P43487">
    <property type="GO annotations" value="5 GO annotations based on evolutionary models"/>
</dbReference>
<dbReference type="PhylomeDB" id="P43487"/>
<dbReference type="PathwayCommons" id="P43487"/>
<dbReference type="Reactome" id="R-HSA-165054">
    <property type="pathway name" value="Rev-mediated nuclear export of HIV RNA"/>
</dbReference>
<dbReference type="SignaLink" id="P43487"/>
<dbReference type="BioGRID-ORCS" id="5902">
    <property type="hits" value="224 hits in 1171 CRISPR screens"/>
</dbReference>
<dbReference type="CD-CODE" id="8C2F96ED">
    <property type="entry name" value="Centrosome"/>
</dbReference>
<dbReference type="CD-CODE" id="DEE660B4">
    <property type="entry name" value="Stress granule"/>
</dbReference>
<dbReference type="ChiTaRS" id="RANBP1">
    <property type="organism name" value="human"/>
</dbReference>
<dbReference type="EvolutionaryTrace" id="P43487"/>
<dbReference type="GeneWiki" id="RANBP1"/>
<dbReference type="GenomeRNAi" id="5902"/>
<dbReference type="Pharos" id="P43487">
    <property type="development level" value="Tbio"/>
</dbReference>
<dbReference type="PRO" id="PR:P43487"/>
<dbReference type="Proteomes" id="UP000005640">
    <property type="component" value="Chromosome 22"/>
</dbReference>
<dbReference type="RNAct" id="P43487">
    <property type="molecule type" value="protein"/>
</dbReference>
<dbReference type="Bgee" id="ENSG00000099901">
    <property type="expression patterns" value="Expressed in ganglionic eminence and 196 other cell types or tissues"/>
</dbReference>
<dbReference type="ExpressionAtlas" id="P43487">
    <property type="expression patterns" value="baseline and differential"/>
</dbReference>
<dbReference type="GO" id="GO:0005813">
    <property type="term" value="C:centrosome"/>
    <property type="evidence" value="ECO:0000318"/>
    <property type="project" value="GO_Central"/>
</dbReference>
<dbReference type="GO" id="GO:0005737">
    <property type="term" value="C:cytoplasm"/>
    <property type="evidence" value="ECO:0000314"/>
    <property type="project" value="BHF-UCL"/>
</dbReference>
<dbReference type="GO" id="GO:0005829">
    <property type="term" value="C:cytosol"/>
    <property type="evidence" value="ECO:0000314"/>
    <property type="project" value="HPA"/>
</dbReference>
<dbReference type="GO" id="GO:0005635">
    <property type="term" value="C:nuclear envelope"/>
    <property type="evidence" value="ECO:0000304"/>
    <property type="project" value="Reactome"/>
</dbReference>
<dbReference type="GO" id="GO:0005643">
    <property type="term" value="C:nuclear pore"/>
    <property type="evidence" value="ECO:0000318"/>
    <property type="project" value="GO_Central"/>
</dbReference>
<dbReference type="GO" id="GO:0005634">
    <property type="term" value="C:nucleus"/>
    <property type="evidence" value="ECO:0000304"/>
    <property type="project" value="UniProtKB"/>
</dbReference>
<dbReference type="GO" id="GO:0045296">
    <property type="term" value="F:cadherin binding"/>
    <property type="evidence" value="ECO:0007005"/>
    <property type="project" value="BHF-UCL"/>
</dbReference>
<dbReference type="GO" id="GO:0005092">
    <property type="term" value="F:GDP-dissociation inhibitor activity"/>
    <property type="evidence" value="ECO:0000315"/>
    <property type="project" value="GO_Central"/>
</dbReference>
<dbReference type="GO" id="GO:0005096">
    <property type="term" value="F:GTPase activator activity"/>
    <property type="evidence" value="ECO:0007669"/>
    <property type="project" value="UniProtKB-KW"/>
</dbReference>
<dbReference type="GO" id="GO:0031267">
    <property type="term" value="F:small GTPase binding"/>
    <property type="evidence" value="ECO:0000304"/>
    <property type="project" value="ProtInc"/>
</dbReference>
<dbReference type="GO" id="GO:0006913">
    <property type="term" value="P:nucleocytoplasmic transport"/>
    <property type="evidence" value="ECO:0007669"/>
    <property type="project" value="InterPro"/>
</dbReference>
<dbReference type="GO" id="GO:0046604">
    <property type="term" value="P:positive regulation of mitotic centrosome separation"/>
    <property type="evidence" value="ECO:0000318"/>
    <property type="project" value="GO_Central"/>
</dbReference>
<dbReference type="GO" id="GO:0007165">
    <property type="term" value="P:signal transduction"/>
    <property type="evidence" value="ECO:0000304"/>
    <property type="project" value="UniProtKB"/>
</dbReference>
<dbReference type="CDD" id="cd13179">
    <property type="entry name" value="RanBD_RanBP1"/>
    <property type="match status" value="1"/>
</dbReference>
<dbReference type="FunFam" id="2.30.29.30:FF:000824">
    <property type="entry name" value="Ran-specific GTPase-activating protein"/>
    <property type="match status" value="1"/>
</dbReference>
<dbReference type="Gene3D" id="2.30.29.30">
    <property type="entry name" value="Pleckstrin-homology domain (PH domain)/Phosphotyrosine-binding domain (PTB)"/>
    <property type="match status" value="1"/>
</dbReference>
<dbReference type="IDEAL" id="IID00337"/>
<dbReference type="InterPro" id="IPR011993">
    <property type="entry name" value="PH-like_dom_sf"/>
</dbReference>
<dbReference type="InterPro" id="IPR000156">
    <property type="entry name" value="Ran_bind_dom"/>
</dbReference>
<dbReference type="InterPro" id="IPR045255">
    <property type="entry name" value="RanBP1-like"/>
</dbReference>
<dbReference type="InterPro" id="IPR045256">
    <property type="entry name" value="RanBP1_RanBD"/>
</dbReference>
<dbReference type="PANTHER" id="PTHR23138">
    <property type="entry name" value="RAN BINDING PROTEIN"/>
    <property type="match status" value="1"/>
</dbReference>
<dbReference type="PANTHER" id="PTHR23138:SF94">
    <property type="entry name" value="RAN BINDING PROTEIN 1"/>
    <property type="match status" value="1"/>
</dbReference>
<dbReference type="Pfam" id="PF00638">
    <property type="entry name" value="Ran_BP1"/>
    <property type="match status" value="1"/>
</dbReference>
<dbReference type="SMART" id="SM00160">
    <property type="entry name" value="RanBD"/>
    <property type="match status" value="1"/>
</dbReference>
<dbReference type="SUPFAM" id="SSF50729">
    <property type="entry name" value="PH domain-like"/>
    <property type="match status" value="1"/>
</dbReference>
<dbReference type="PROSITE" id="PS50196">
    <property type="entry name" value="RANBD1"/>
    <property type="match status" value="1"/>
</dbReference>
<comment type="function">
    <text evidence="1 7 8 9 10">Plays a role in RAN-dependent nucleocytoplasmic transport. Alleviates the TNPO1-dependent inhibition of RAN GTPase activity and mediates the dissociation of RAN from proteins involved in transport into the nucleus (By similarity). Induces a conformation change in the complex formed by XPO1 and RAN that triggers the release of the nuclear export signal of cargo proteins (PubMed:20485264). Promotes the disassembly of the complex formed by RAN and importin beta. Promotes dissociation of RAN from a complex with KPNA2 and CSE1L (By similarity). Required for normal mitotic spindle assembly and normal progress through mitosis via its effect on RAN (PubMed:17671426). Does not increase the RAN GTPase activity by itself, but increases GTP hydrolysis mediated by RANGAP1 (PubMed:7882974). Inhibits RCC1-dependent exchange of RAN-bound GDP by GTP (PubMed:7616957, PubMed:7882974).</text>
</comment>
<comment type="subunit">
    <text evidence="1 4 5 9 10 11 12">Interacts with RAN (via C-terminus of GTP-bound form) but not with GDP-bound RAN (PubMed:7882974, PubMed:7891706, PubMed:8896452). Identified in a complex composed of RAN, RANGAP1 and RANBP1 (PubMed:11832950, PubMed:16428860). Identified in a complex that contains TNPO1, RAN and RANBP1. Identified in a complex that contains CSE1L, KPNA2, RAN and RANBP1 (By similarity). Identified in a complex with nucleotide-free RAN and RCC1 (PubMed:7616957, PubMed:7882974).</text>
</comment>
<comment type="alternative products">
    <event type="alternative splicing"/>
    <isoform>
        <id>P43487-1</id>
        <name>1</name>
        <sequence type="displayed"/>
    </isoform>
    <isoform>
        <id>P43487-2</id>
        <name>2</name>
        <sequence type="described" ref="VSP_055104"/>
    </isoform>
</comment>
<comment type="similarity">
    <text evidence="15">Belongs to the RANBP1 family.</text>
</comment>
<protein>
    <recommendedName>
        <fullName>Ran-specific GTPase-activating protein</fullName>
    </recommendedName>
    <alternativeName>
        <fullName>Ran-binding protein 1</fullName>
        <shortName>RanBP1</shortName>
    </alternativeName>
</protein>
<evidence type="ECO:0000250" key="1">
    <source>
        <dbReference type="UniProtKB" id="P34022"/>
    </source>
</evidence>
<evidence type="ECO:0000255" key="2">
    <source>
        <dbReference type="PROSITE-ProRule" id="PRU00164"/>
    </source>
</evidence>
<evidence type="ECO:0000256" key="3">
    <source>
        <dbReference type="SAM" id="MobiDB-lite"/>
    </source>
</evidence>
<evidence type="ECO:0000269" key="4">
    <source>
    </source>
</evidence>
<evidence type="ECO:0000269" key="5">
    <source>
    </source>
</evidence>
<evidence type="ECO:0000269" key="6">
    <source>
    </source>
</evidence>
<evidence type="ECO:0000269" key="7">
    <source>
    </source>
</evidence>
<evidence type="ECO:0000269" key="8">
    <source>
    </source>
</evidence>
<evidence type="ECO:0000269" key="9">
    <source>
    </source>
</evidence>
<evidence type="ECO:0000269" key="10">
    <source>
    </source>
</evidence>
<evidence type="ECO:0000269" key="11">
    <source>
    </source>
</evidence>
<evidence type="ECO:0000269" key="12">
    <source>
    </source>
</evidence>
<evidence type="ECO:0000303" key="13">
    <source>
    </source>
</evidence>
<evidence type="ECO:0000303" key="14">
    <source ref="4"/>
</evidence>
<evidence type="ECO:0000305" key="15"/>
<evidence type="ECO:0007744" key="16">
    <source>
        <dbReference type="PDB" id="1K5D"/>
    </source>
</evidence>
<evidence type="ECO:0007744" key="17">
    <source>
        <dbReference type="PDB" id="1K5G"/>
    </source>
</evidence>
<evidence type="ECO:0007744" key="18">
    <source>
    </source>
</evidence>
<evidence type="ECO:0007744" key="19">
    <source>
    </source>
</evidence>
<evidence type="ECO:0007744" key="20">
    <source>
    </source>
</evidence>
<evidence type="ECO:0007744" key="21">
    <source>
    </source>
</evidence>
<evidence type="ECO:0007744" key="22">
    <source>
    </source>
</evidence>
<evidence type="ECO:0007744" key="23">
    <source>
    </source>
</evidence>
<evidence type="ECO:0007744" key="24">
    <source>
    </source>
</evidence>
<evidence type="ECO:0007744" key="25">
    <source>
    </source>
</evidence>
<evidence type="ECO:0007744" key="26">
    <source>
    </source>
</evidence>
<evidence type="ECO:0007829" key="27">
    <source>
        <dbReference type="PDB" id="1K5D"/>
    </source>
</evidence>